<organism>
    <name type="scientific">Drosophila melanogaster</name>
    <name type="common">Fruit fly</name>
    <dbReference type="NCBI Taxonomy" id="7227"/>
    <lineage>
        <taxon>Eukaryota</taxon>
        <taxon>Metazoa</taxon>
        <taxon>Ecdysozoa</taxon>
        <taxon>Arthropoda</taxon>
        <taxon>Hexapoda</taxon>
        <taxon>Insecta</taxon>
        <taxon>Pterygota</taxon>
        <taxon>Neoptera</taxon>
        <taxon>Endopterygota</taxon>
        <taxon>Diptera</taxon>
        <taxon>Brachycera</taxon>
        <taxon>Muscomorpha</taxon>
        <taxon>Ephydroidea</taxon>
        <taxon>Drosophilidae</taxon>
        <taxon>Drosophila</taxon>
        <taxon>Sophophora</taxon>
    </lineage>
</organism>
<proteinExistence type="inferred from homology"/>
<sequence length="228" mass="26191">MSTWANLGLQDSASPLMEQLIFFHDHALLILVMITVLVGYLMFMLFFNNYVNRFLLHGQLIEMIWTILPAIILLFIALPSLRLLYLLDEINEPSVTLKSIGHQWYWSYEYSDFNNIEFDSYMIPTNELMTDGFRLLDVDNRVVLPMNSQIRILVTAADVIHSWTVPALGVKVDGTPGRLNQTNFFINRPGLFYGQCSEICGANHSFMPIVIESVPVNYFIKWISSNNS</sequence>
<dbReference type="EC" id="7.1.1.9"/>
<dbReference type="EMBL" id="J01404">
    <property type="protein sequence ID" value="AAB59240.1"/>
    <property type="molecule type" value="Genomic_DNA"/>
</dbReference>
<dbReference type="EMBL" id="AF200828">
    <property type="protein sequence ID" value="AAF77228.1"/>
    <property type="molecule type" value="Genomic_DNA"/>
</dbReference>
<dbReference type="EMBL" id="AF200829">
    <property type="protein sequence ID" value="AAF77240.1"/>
    <property type="molecule type" value="Genomic_DNA"/>
</dbReference>
<dbReference type="EMBL" id="AJ400907">
    <property type="protein sequence ID" value="CAB91053.1"/>
    <property type="molecule type" value="Genomic_DNA"/>
</dbReference>
<dbReference type="EMBL" id="FJ190105">
    <property type="protein sequence ID" value="ACI28544.1"/>
    <property type="molecule type" value="Genomic_DNA"/>
</dbReference>
<dbReference type="EMBL" id="FJ190106">
    <property type="protein sequence ID" value="ACI28557.1"/>
    <property type="molecule type" value="Genomic_DNA"/>
</dbReference>
<dbReference type="EMBL" id="FJ190107">
    <property type="protein sequence ID" value="ACI28570.1"/>
    <property type="molecule type" value="Genomic_DNA"/>
</dbReference>
<dbReference type="EMBL" id="FJ190108">
    <property type="protein sequence ID" value="ACI28583.1"/>
    <property type="molecule type" value="Genomic_DNA"/>
</dbReference>
<dbReference type="EMBL" id="FJ190109">
    <property type="protein sequence ID" value="ACI28596.1"/>
    <property type="molecule type" value="Genomic_DNA"/>
</dbReference>
<dbReference type="EMBL" id="FJ190110">
    <property type="protein sequence ID" value="ACI28609.1"/>
    <property type="molecule type" value="Genomic_DNA"/>
</dbReference>
<dbReference type="EMBL" id="EU493757">
    <property type="protein sequence ID" value="ACC94832.1"/>
    <property type="molecule type" value="Genomic_DNA"/>
</dbReference>
<dbReference type="EMBL" id="U37541">
    <property type="protein sequence ID" value="AAC47813.1"/>
    <property type="molecule type" value="Genomic_DNA"/>
</dbReference>
<dbReference type="EMBL" id="KJ947872">
    <property type="protein sequence ID" value="AIC64006.1"/>
    <property type="molecule type" value="Genomic_DNA"/>
</dbReference>
<dbReference type="EMBL" id="AM403329">
    <property type="protein sequence ID" value="CAL48258.1"/>
    <property type="molecule type" value="Genomic_DNA"/>
</dbReference>
<dbReference type="PIR" id="A00476">
    <property type="entry name" value="OBFF2"/>
</dbReference>
<dbReference type="RefSeq" id="YP_009047268.1">
    <property type="nucleotide sequence ID" value="NC_024511.2"/>
</dbReference>
<dbReference type="SMR" id="P00408"/>
<dbReference type="BioGRID" id="2595064">
    <property type="interactions" value="22"/>
</dbReference>
<dbReference type="ComplexPortal" id="CPX-8620">
    <property type="entry name" value="Mitochondrial respiratory chain complex IV"/>
</dbReference>
<dbReference type="ComplexPortal" id="CPX-8621">
    <property type="entry name" value="Mitochondrial respiratory chain complex IV, testis-specific variant"/>
</dbReference>
<dbReference type="FunCoup" id="P00408">
    <property type="interactions" value="149"/>
</dbReference>
<dbReference type="IntAct" id="P00408">
    <property type="interactions" value="88"/>
</dbReference>
<dbReference type="STRING" id="7227.FBpp0100177"/>
<dbReference type="PaxDb" id="7227-FBpp0100177"/>
<dbReference type="EnsemblMetazoa" id="FBtr0100863">
    <property type="protein sequence ID" value="FBpp0100177"/>
    <property type="gene ID" value="FBgn0013675"/>
</dbReference>
<dbReference type="GeneID" id="19893535"/>
<dbReference type="KEGG" id="dme:Dmel_CG34069"/>
<dbReference type="AGR" id="FB:FBgn0013675"/>
<dbReference type="CTD" id="4513"/>
<dbReference type="FlyBase" id="FBgn0013675">
    <property type="gene designation" value="mt:CoII"/>
</dbReference>
<dbReference type="VEuPathDB" id="VectorBase:FBgn0013675"/>
<dbReference type="eggNOG" id="KOG4767">
    <property type="taxonomic scope" value="Eukaryota"/>
</dbReference>
<dbReference type="GeneTree" id="ENSGT00390000017410"/>
<dbReference type="HOGENOM" id="CLU_036876_2_3_1"/>
<dbReference type="InParanoid" id="P00408"/>
<dbReference type="OMA" id="WSYEYTD"/>
<dbReference type="OrthoDB" id="539285at2759"/>
<dbReference type="PhylomeDB" id="P00408"/>
<dbReference type="Reactome" id="R-DME-5628897">
    <property type="pathway name" value="TP53 Regulates Metabolic Genes"/>
</dbReference>
<dbReference type="Reactome" id="R-DME-611105">
    <property type="pathway name" value="Respiratory electron transport"/>
</dbReference>
<dbReference type="Reactome" id="R-DME-9707564">
    <property type="pathway name" value="Cytoprotection by HMOX1"/>
</dbReference>
<dbReference type="Reactome" id="R-DME-9864848">
    <property type="pathway name" value="Complex IV assembly"/>
</dbReference>
<dbReference type="GenomeRNAi" id="19893535"/>
<dbReference type="PRO" id="PR:P00408"/>
<dbReference type="Proteomes" id="UP000000803">
    <property type="component" value="Mitochondrion"/>
</dbReference>
<dbReference type="Bgee" id="FBgn0013675">
    <property type="expression patterns" value="Expressed in adult anterior midgut class I enteroendocrine cell in adult midgut (Drosophila) and 275 other cell types or tissues"/>
</dbReference>
<dbReference type="ExpressionAtlas" id="P00408">
    <property type="expression patterns" value="baseline and differential"/>
</dbReference>
<dbReference type="GO" id="GO:0005743">
    <property type="term" value="C:mitochondrial inner membrane"/>
    <property type="evidence" value="ECO:0000314"/>
    <property type="project" value="FlyBase"/>
</dbReference>
<dbReference type="GO" id="GO:0045277">
    <property type="term" value="C:respiratory chain complex IV"/>
    <property type="evidence" value="ECO:0000314"/>
    <property type="project" value="FlyBase"/>
</dbReference>
<dbReference type="GO" id="GO:0005507">
    <property type="term" value="F:copper ion binding"/>
    <property type="evidence" value="ECO:0007669"/>
    <property type="project" value="InterPro"/>
</dbReference>
<dbReference type="GO" id="GO:0004129">
    <property type="term" value="F:cytochrome-c oxidase activity"/>
    <property type="evidence" value="ECO:0007669"/>
    <property type="project" value="UniProtKB-EC"/>
</dbReference>
<dbReference type="GO" id="GO:0042773">
    <property type="term" value="P:ATP synthesis coupled electron transport"/>
    <property type="evidence" value="ECO:0000318"/>
    <property type="project" value="GO_Central"/>
</dbReference>
<dbReference type="GO" id="GO:0006123">
    <property type="term" value="P:mitochondrial electron transport, cytochrome c to oxygen"/>
    <property type="evidence" value="ECO:0000250"/>
    <property type="project" value="FlyBase"/>
</dbReference>
<dbReference type="CDD" id="cd13912">
    <property type="entry name" value="CcO_II_C"/>
    <property type="match status" value="1"/>
</dbReference>
<dbReference type="FunFam" id="1.10.287.90:FF:000006">
    <property type="entry name" value="Cytochrome c oxidase subunit 2"/>
    <property type="match status" value="1"/>
</dbReference>
<dbReference type="FunFam" id="2.60.40.420:FF:000001">
    <property type="entry name" value="Cytochrome c oxidase subunit 2"/>
    <property type="match status" value="1"/>
</dbReference>
<dbReference type="Gene3D" id="1.10.287.90">
    <property type="match status" value="1"/>
</dbReference>
<dbReference type="Gene3D" id="2.60.40.420">
    <property type="entry name" value="Cupredoxins - blue copper proteins"/>
    <property type="match status" value="1"/>
</dbReference>
<dbReference type="InterPro" id="IPR045187">
    <property type="entry name" value="CcO_II"/>
</dbReference>
<dbReference type="InterPro" id="IPR002429">
    <property type="entry name" value="CcO_II-like_C"/>
</dbReference>
<dbReference type="InterPro" id="IPR034210">
    <property type="entry name" value="CcO_II_C"/>
</dbReference>
<dbReference type="InterPro" id="IPR001505">
    <property type="entry name" value="Copper_CuA"/>
</dbReference>
<dbReference type="InterPro" id="IPR008972">
    <property type="entry name" value="Cupredoxin"/>
</dbReference>
<dbReference type="InterPro" id="IPR014222">
    <property type="entry name" value="Cyt_c_oxidase_su2"/>
</dbReference>
<dbReference type="InterPro" id="IPR011759">
    <property type="entry name" value="Cyt_c_oxidase_su2_TM_dom"/>
</dbReference>
<dbReference type="InterPro" id="IPR036257">
    <property type="entry name" value="Cyt_c_oxidase_su2_TM_sf"/>
</dbReference>
<dbReference type="NCBIfam" id="TIGR02866">
    <property type="entry name" value="CoxB"/>
    <property type="match status" value="1"/>
</dbReference>
<dbReference type="PANTHER" id="PTHR22888:SF9">
    <property type="entry name" value="CYTOCHROME C OXIDASE SUBUNIT 2"/>
    <property type="match status" value="1"/>
</dbReference>
<dbReference type="PANTHER" id="PTHR22888">
    <property type="entry name" value="CYTOCHROME C OXIDASE, SUBUNIT II"/>
    <property type="match status" value="1"/>
</dbReference>
<dbReference type="Pfam" id="PF00116">
    <property type="entry name" value="COX2"/>
    <property type="match status" value="1"/>
</dbReference>
<dbReference type="Pfam" id="PF02790">
    <property type="entry name" value="COX2_TM"/>
    <property type="match status" value="1"/>
</dbReference>
<dbReference type="PRINTS" id="PR01166">
    <property type="entry name" value="CYCOXIDASEII"/>
</dbReference>
<dbReference type="SUPFAM" id="SSF49503">
    <property type="entry name" value="Cupredoxins"/>
    <property type="match status" value="1"/>
</dbReference>
<dbReference type="SUPFAM" id="SSF81464">
    <property type="entry name" value="Cytochrome c oxidase subunit II-like, transmembrane region"/>
    <property type="match status" value="1"/>
</dbReference>
<dbReference type="PROSITE" id="PS00078">
    <property type="entry name" value="COX2"/>
    <property type="match status" value="1"/>
</dbReference>
<dbReference type="PROSITE" id="PS50857">
    <property type="entry name" value="COX2_CUA"/>
    <property type="match status" value="1"/>
</dbReference>
<dbReference type="PROSITE" id="PS50999">
    <property type="entry name" value="COX2_TM"/>
    <property type="match status" value="1"/>
</dbReference>
<evidence type="ECO:0000250" key="1">
    <source>
        <dbReference type="UniProtKB" id="P00410"/>
    </source>
</evidence>
<evidence type="ECO:0000255" key="2"/>
<evidence type="ECO:0000269" key="3">
    <source>
    </source>
</evidence>
<evidence type="ECO:0000305" key="4"/>
<protein>
    <recommendedName>
        <fullName>Cytochrome c oxidase subunit 2</fullName>
        <ecNumber>7.1.1.9</ecNumber>
    </recommendedName>
    <alternativeName>
        <fullName>Cytochrome c oxidase polypeptide II</fullName>
    </alternativeName>
</protein>
<keyword id="KW-0186">Copper</keyword>
<keyword id="KW-0249">Electron transport</keyword>
<keyword id="KW-0460">Magnesium</keyword>
<keyword id="KW-0472">Membrane</keyword>
<keyword id="KW-0479">Metal-binding</keyword>
<keyword id="KW-0496">Mitochondrion</keyword>
<keyword id="KW-0999">Mitochondrion inner membrane</keyword>
<keyword id="KW-1185">Reference proteome</keyword>
<keyword id="KW-0679">Respiratory chain</keyword>
<keyword id="KW-1278">Translocase</keyword>
<keyword id="KW-0812">Transmembrane</keyword>
<keyword id="KW-1133">Transmembrane helix</keyword>
<keyword id="KW-0813">Transport</keyword>
<geneLocation type="mitochondrion"/>
<reference key="1">
    <citation type="journal article" date="1983" name="Nature">
        <title>Drosophila melanogaster mitochondrial DNA, a novel organization and genetic code.</title>
        <authorList>
            <person name="de Bruijn M.H.L."/>
        </authorList>
    </citation>
    <scope>NUCLEOTIDE SEQUENCE [GENOMIC DNA]</scope>
    <source>
        <strain>Oregon-R</strain>
        <tissue>Embryo</tissue>
    </source>
</reference>
<reference key="2">
    <citation type="journal article" date="2000" name="J. Mol. Evol.">
        <title>Comparative genomics of mitochondrial DNA in members of the Drosophila melanogaster subgroup.</title>
        <authorList>
            <person name="Ballard J.W.O."/>
        </authorList>
    </citation>
    <scope>NUCLEOTIDE SEQUENCE [GENOMIC DNA]</scope>
    <source>
        <strain>Oregon-R</strain>
        <strain>Zimbabwe 53</strain>
    </source>
</reference>
<reference key="3">
    <citation type="journal article" date="2001" name="Heredity">
        <title>I-R system of hybrid dysgenesis in Drosophila melanogaster: analysis of the mitochondrial DNA in reactive strains exhibiting different potentials for I factor transposition.</title>
        <authorList>
            <person name="Azou Y."/>
            <person name="Bregliano J.C."/>
        </authorList>
    </citation>
    <scope>NUCLEOTIDE SEQUENCE [GENOMIC DNA]</scope>
    <source>
        <strain>Paris</strain>
    </source>
</reference>
<reference key="4">
    <citation type="journal article" date="2008" name="Aging Cell">
        <title>Variation in mitochondrial genotype has substantial lifespan effects which may be modulated by nuclear background.</title>
        <authorList>
            <person name="Clancy D.J."/>
        </authorList>
    </citation>
    <scope>NUCLEOTIDE SEQUENCE [GENOMIC DNA]</scope>
    <scope>VARIANT SER-39</scope>
    <source>
        <strain>Alstonvl</strain>
        <strain>Brownsvl</strain>
        <strain>Dahomey</strain>
        <strain>Japan</strain>
        <strain>Mysore</strain>
        <strain>W1118iso</strain>
    </source>
</reference>
<reference key="5">
    <citation type="journal article" date="2008" name="Biol. Lett.">
        <title>Out of Hawaii: the origin and biogeography of the genus Scaptomyza (Diptera: Drosophilidae).</title>
        <authorList>
            <person name="O'Grady P.M."/>
            <person name="DeSalle R."/>
        </authorList>
    </citation>
    <scope>NUCLEOTIDE SEQUENCE [GENOMIC DNA]</scope>
</reference>
<reference key="6">
    <citation type="journal article" date="1995" name="Insect Mol. Biol.">
        <title>Drosophila melanogaster mitochondrial DNA: completion of the nucleotide sequence and evolutionary comparisons.</title>
        <authorList>
            <person name="Lewis D.L."/>
            <person name="Farr C.L."/>
            <person name="Kaguni L.S."/>
        </authorList>
    </citation>
    <scope>NUCLEOTIDE SEQUENCE [LARGE SCALE GENOMIC DNA]</scope>
</reference>
<reference key="7">
    <citation type="submission" date="2014-08" db="EMBL/GenBank/DDBJ databases">
        <authorList>
            <person name="Wan K."/>
            <person name="Celniker S."/>
        </authorList>
    </citation>
    <scope>NUCLEOTIDE SEQUENCE [LARGE SCALE GENOMIC DNA]</scope>
    <source>
        <strain>Berkeley</strain>
    </source>
</reference>
<reference key="8">
    <citation type="journal article" date="2007" name="Genetics">
        <title>Intergenomic epistasis for fitness: within-population interactions between cytoplasmic and nuclear genes in Drosophila melanogaster.</title>
        <authorList>
            <person name="Dowling D.K."/>
            <person name="Friberg U."/>
            <person name="Hailer F."/>
            <person name="Arnqvist G."/>
        </authorList>
    </citation>
    <scope>NUCLEOTIDE SEQUENCE [GENOMIC DNA] OF 1-225</scope>
    <source>
        <strain>LHM</strain>
    </source>
</reference>
<accession>P00408</accession>
<accession>B2L9S3</accession>
<accession>B6E0V9</accession>
<accession>Q05GI7</accession>
<gene>
    <name type="primary">mt:CoII</name>
    <name type="synonym">COII</name>
</gene>
<feature type="chain" id="PRO_0000183579" description="Cytochrome c oxidase subunit 2">
    <location>
        <begin position="1"/>
        <end position="228"/>
    </location>
</feature>
<feature type="topological domain" description="Mitochondrial intermembrane" evidence="2">
    <location>
        <begin position="1"/>
        <end position="26"/>
    </location>
</feature>
<feature type="transmembrane region" description="Helical" evidence="2">
    <location>
        <begin position="27"/>
        <end position="48"/>
    </location>
</feature>
<feature type="topological domain" description="Mitochondrial matrix" evidence="2">
    <location>
        <begin position="49"/>
        <end position="62"/>
    </location>
</feature>
<feature type="transmembrane region" description="Helical" evidence="2">
    <location>
        <begin position="63"/>
        <end position="82"/>
    </location>
</feature>
<feature type="topological domain" description="Mitochondrial intermembrane" evidence="2">
    <location>
        <begin position="83"/>
        <end position="228"/>
    </location>
</feature>
<feature type="binding site" evidence="1">
    <location>
        <position position="161"/>
    </location>
    <ligand>
        <name>Cu cation</name>
        <dbReference type="ChEBI" id="CHEBI:23378"/>
        <label>A1</label>
    </ligand>
</feature>
<feature type="binding site" evidence="1">
    <location>
        <position position="196"/>
    </location>
    <ligand>
        <name>Cu cation</name>
        <dbReference type="ChEBI" id="CHEBI:23378"/>
        <label>A1</label>
    </ligand>
</feature>
<feature type="binding site" evidence="1">
    <location>
        <position position="196"/>
    </location>
    <ligand>
        <name>Cu cation</name>
        <dbReference type="ChEBI" id="CHEBI:23378"/>
        <label>A2</label>
    </ligand>
</feature>
<feature type="binding site" evidence="1">
    <location>
        <position position="198"/>
    </location>
    <ligand>
        <name>Cu cation</name>
        <dbReference type="ChEBI" id="CHEBI:23378"/>
        <label>A2</label>
    </ligand>
</feature>
<feature type="binding site" evidence="1">
    <location>
        <position position="198"/>
    </location>
    <ligand>
        <name>Mg(2+)</name>
        <dbReference type="ChEBI" id="CHEBI:18420"/>
        <note>ligand shared with subunit 1</note>
    </ligand>
</feature>
<feature type="binding site" evidence="1">
    <location>
        <position position="200"/>
    </location>
    <ligand>
        <name>Cu cation</name>
        <dbReference type="ChEBI" id="CHEBI:23378"/>
        <label>A1</label>
    </ligand>
</feature>
<feature type="binding site" evidence="1">
    <location>
        <position position="200"/>
    </location>
    <ligand>
        <name>Cu cation</name>
        <dbReference type="ChEBI" id="CHEBI:23378"/>
        <label>A2</label>
    </ligand>
</feature>
<feature type="binding site" evidence="1">
    <location>
        <position position="204"/>
    </location>
    <ligand>
        <name>Cu cation</name>
        <dbReference type="ChEBI" id="CHEBI:23378"/>
        <label>A2</label>
    </ligand>
</feature>
<feature type="binding site" evidence="1">
    <location>
        <position position="207"/>
    </location>
    <ligand>
        <name>Cu cation</name>
        <dbReference type="ChEBI" id="CHEBI:23378"/>
        <label>A1</label>
    </ligand>
</feature>
<feature type="sequence variant" description="In strain: Mysore." evidence="3">
    <original>G</original>
    <variation>S</variation>
    <location>
        <position position="39"/>
    </location>
</feature>
<comment type="function">
    <text evidence="1">Component of the cytochrome c oxidase, the last enzyme in the mitochondrial electron transport chain which drives oxidative phosphorylation. The respiratory chain contains 3 multisubunit complexes succinate dehydrogenase (complex II, CII), ubiquinol-cytochrome c oxidoreductase (cytochrome b-c1 complex, complex III, CIII) and cytochrome c oxidase (complex IV, CIV), that cooperate to transfer electrons derived from NADH and succinate to molecular oxygen, creating an electrochemical gradient over the inner membrane that drives transmembrane transport and the ATP synthase. Cytochrome c oxidase is the component of the respiratory chain that catalyzes the reduction of oxygen to water. Electrons originating from reduced cytochrome c in the intermembrane space (IMS) are transferred via the dinuclear copper A center (CU(A)) of subunit 2 and heme A of subunit 1 to the active site in subunit 1, a binuclear center (BNC) formed by heme A3 and copper B (CU(B)). The BNC reduces molecular oxygen to 2 water molecules using 4 electrons from cytochrome c in the IMS and 4 protons from the mitochondrial matrix.</text>
</comment>
<comment type="catalytic activity">
    <reaction evidence="1">
        <text>4 Fe(II)-[cytochrome c] + O2 + 8 H(+)(in) = 4 Fe(III)-[cytochrome c] + 2 H2O + 4 H(+)(out)</text>
        <dbReference type="Rhea" id="RHEA:11436"/>
        <dbReference type="Rhea" id="RHEA-COMP:10350"/>
        <dbReference type="Rhea" id="RHEA-COMP:14399"/>
        <dbReference type="ChEBI" id="CHEBI:15377"/>
        <dbReference type="ChEBI" id="CHEBI:15378"/>
        <dbReference type="ChEBI" id="CHEBI:15379"/>
        <dbReference type="ChEBI" id="CHEBI:29033"/>
        <dbReference type="ChEBI" id="CHEBI:29034"/>
        <dbReference type="EC" id="7.1.1.9"/>
    </reaction>
    <physiologicalReaction direction="left-to-right" evidence="1">
        <dbReference type="Rhea" id="RHEA:11437"/>
    </physiologicalReaction>
</comment>
<comment type="cofactor">
    <cofactor evidence="1">
        <name>Cu cation</name>
        <dbReference type="ChEBI" id="CHEBI:23378"/>
    </cofactor>
    <text evidence="1">Binds a dinuclear copper A center per subunit.</text>
</comment>
<comment type="subunit">
    <text evidence="1">Component of the cytochrome c oxidase (complex IV, CIV), a multisubunit enzyme composed of a catalytic core of 3 subunits and several supernumerary subunits. The complex exists as a monomer or a dimer and forms supercomplexes (SCs) in the inner mitochondrial membrane with ubiquinol-cytochrome c oxidoreductase (cytochrome b-c1 complex, complex III, CIII).</text>
</comment>
<comment type="subcellular location">
    <subcellularLocation>
        <location evidence="1">Mitochondrion inner membrane</location>
        <topology evidence="1">Multi-pass membrane protein</topology>
    </subcellularLocation>
</comment>
<comment type="similarity">
    <text evidence="4">Belongs to the cytochrome c oxidase subunit 2 family.</text>
</comment>
<name>COX2_DROME</name>